<dbReference type="EMBL" id="AJ272083">
    <property type="protein sequence ID" value="CAB75984.1"/>
    <property type="molecule type" value="Genomic_DNA"/>
</dbReference>
<dbReference type="EMBL" id="CP000253">
    <property type="protein sequence ID" value="ABD29943.1"/>
    <property type="molecule type" value="Genomic_DNA"/>
</dbReference>
<dbReference type="RefSeq" id="WP_000728056.1">
    <property type="nucleotide sequence ID" value="NZ_LS483365.1"/>
</dbReference>
<dbReference type="RefSeq" id="YP_499371.1">
    <property type="nucleotide sequence ID" value="NC_007795.1"/>
</dbReference>
<dbReference type="PaxDb" id="1280-SAXN108_0858"/>
<dbReference type="GeneID" id="3919378"/>
<dbReference type="KEGG" id="sao:SAOUHSC_00816"/>
<dbReference type="PATRIC" id="fig|93061.5.peg.737"/>
<dbReference type="HOGENOM" id="CLU_078520_0_0_9"/>
<dbReference type="OrthoDB" id="2413495at2"/>
<dbReference type="PRO" id="PR:Q2G012"/>
<dbReference type="Proteomes" id="UP000008816">
    <property type="component" value="Chromosome"/>
</dbReference>
<dbReference type="GO" id="GO:0009986">
    <property type="term" value="C:cell surface"/>
    <property type="evidence" value="ECO:0007669"/>
    <property type="project" value="UniProtKB-SubCell"/>
</dbReference>
<accession>Q2G012</accession>
<protein>
    <recommendedName>
        <fullName>Extracellular matrix protein-binding protein emp</fullName>
    </recommendedName>
</protein>
<reference key="1">
    <citation type="journal article" date="2001" name="J. Bacteriol.">
        <title>Identification and characterization of a novel 38.5-kilodalton cell surface protein of Staphylococcus aureus with extended-spectrum binding activity for extracellular matrix and plasma proteins.</title>
        <authorList>
            <person name="Hussain M.S."/>
            <person name="Becker K."/>
            <person name="von Eiff C."/>
            <person name="Schrenzel J."/>
            <person name="Peters G."/>
            <person name="Herrmann M."/>
        </authorList>
    </citation>
    <scope>NUCLEOTIDE SEQUENCE [GENOMIC DNA]</scope>
</reference>
<reference key="2">
    <citation type="book" date="2006" name="Gram positive pathogens, 2nd edition">
        <title>The Staphylococcus aureus NCTC 8325 genome.</title>
        <editorList>
            <person name="Fischetti V."/>
            <person name="Novick R."/>
            <person name="Ferretti J."/>
            <person name="Portnoy D."/>
            <person name="Rood J."/>
        </editorList>
        <authorList>
            <person name="Gillaspy A.F."/>
            <person name="Worrell V."/>
            <person name="Orvis J."/>
            <person name="Roe B.A."/>
            <person name="Dyer D.W."/>
            <person name="Iandolo J.J."/>
        </authorList>
    </citation>
    <scope>NUCLEOTIDE SEQUENCE [LARGE SCALE GENOMIC DNA]</scope>
    <source>
        <strain>NCTC 8325 / PS 47</strain>
    </source>
</reference>
<proteinExistence type="inferred from homology"/>
<sequence>MKKKLLVLTMSTLFATQIMNSNHAKASVTESVDKKFVVPESGINKIIPAYDEFKNSPKVNVSNLTDNKNFVASEDKLNKIADSSAASKIVDKNFVVPESKLGNIVPEYKEINNRVNVATNNPASQQVDKHFVAKGPEVNRFITQNKVNHHFITTQTHYKKVITSYKSTHVHKHVNHAKDSINKHFIVKPSESPRYTHPSQSLIIKHHFAVPGYHAHKFVTPGHASIKINHFCVVPQINSFKVIPPYGHNSHRMHVPSFQNNTTATHQNAKVNKAYDYKYFYSYKVVKGVKKYFSFSQSNGYKIGKPSLNIKNVNYQYAVPSYSPTHYVPEFKGSLPAPRV</sequence>
<keyword id="KW-1185">Reference proteome</keyword>
<keyword id="KW-0732">Signal</keyword>
<name>EMP_STAA8</name>
<organism>
    <name type="scientific">Staphylococcus aureus (strain NCTC 8325 / PS 47)</name>
    <dbReference type="NCBI Taxonomy" id="93061"/>
    <lineage>
        <taxon>Bacteria</taxon>
        <taxon>Bacillati</taxon>
        <taxon>Bacillota</taxon>
        <taxon>Bacilli</taxon>
        <taxon>Bacillales</taxon>
        <taxon>Staphylococcaceae</taxon>
        <taxon>Staphylococcus</taxon>
    </lineage>
</organism>
<comment type="function">
    <text evidence="1">Adhesin that binds to the host cell extracellular matrix proteins fibronectin, fibrinogen, collagen, and vitronectin.</text>
</comment>
<comment type="subcellular location">
    <subcellularLocation>
        <location evidence="1">Cell surface</location>
    </subcellularLocation>
</comment>
<evidence type="ECO:0000250" key="1"/>
<gene>
    <name type="primary">emp</name>
    <name type="ordered locus">SAOUHSC_00816</name>
</gene>
<feature type="signal peptide" evidence="1">
    <location>
        <begin position="1"/>
        <end position="26"/>
    </location>
</feature>
<feature type="chain" id="PRO_0000271534" description="Extracellular matrix protein-binding protein emp">
    <location>
        <begin position="27"/>
        <end position="340"/>
    </location>
</feature>